<feature type="peptide" id="PRO_0000155142" description="Ice-structuring glycoprotein 8R">
    <location>
        <begin position="1"/>
        <end position="16"/>
    </location>
</feature>
<protein>
    <recommendedName>
        <fullName>Ice-structuring glycoprotein 8R</fullName>
        <shortName>ISGP 8R</shortName>
    </recommendedName>
    <alternativeName>
        <fullName>Antifreeze glycoprotein 8R</fullName>
    </alternativeName>
</protein>
<reference key="1">
    <citation type="journal article" date="1986" name="J. Biol. Chem.">
        <title>Purification and primary sequences of the major arginine-containing antifreeze glycopeptides from the fish Eleginus gracilis.</title>
        <authorList>
            <person name="Burcham T.S."/>
            <person name="Osuga D.T."/>
            <person name="Rao B.N.N."/>
            <person name="Bush C.A."/>
            <person name="Feeney R.E."/>
        </authorList>
    </citation>
    <scope>PROTEIN SEQUENCE</scope>
</reference>
<comment type="function">
    <text>Antifreeze proteins lower the blood freezing point.</text>
</comment>
<comment type="subcellular location">
    <subcellularLocation>
        <location>Secreted</location>
    </subcellularLocation>
</comment>
<comment type="PTM">
    <text evidence="1">O-glycosylated; contains disaccharide galactose-N-acetylgalactosamine attached to threonines.</text>
</comment>
<keyword id="KW-0047">Antifreeze protein</keyword>
<keyword id="KW-0903">Direct protein sequencing</keyword>
<keyword id="KW-0325">Glycoprotein</keyword>
<keyword id="KW-0964">Secreted</keyword>
<name>ANP8_ELEGR</name>
<organism>
    <name type="scientific">Eleginus gracilis</name>
    <name type="common">Saffron cod</name>
    <name type="synonym">Gadus gracilis</name>
    <dbReference type="NCBI Taxonomy" id="8047"/>
    <lineage>
        <taxon>Eukaryota</taxon>
        <taxon>Metazoa</taxon>
        <taxon>Chordata</taxon>
        <taxon>Craniata</taxon>
        <taxon>Vertebrata</taxon>
        <taxon>Euteleostomi</taxon>
        <taxon>Actinopterygii</taxon>
        <taxon>Neopterygii</taxon>
        <taxon>Teleostei</taxon>
        <taxon>Neoteleostei</taxon>
        <taxon>Acanthomorphata</taxon>
        <taxon>Zeiogadaria</taxon>
        <taxon>Gadariae</taxon>
        <taxon>Gadiformes</taxon>
        <taxon>Gadoidei</taxon>
        <taxon>Gadidae</taxon>
        <taxon>Eleginus</taxon>
    </lineage>
</organism>
<proteinExistence type="evidence at protein level"/>
<evidence type="ECO:0000250" key="1"/>
<accession>P11921</accession>
<dbReference type="PIR" id="A25213">
    <property type="entry name" value="A25213"/>
</dbReference>
<dbReference type="GO" id="GO:0005576">
    <property type="term" value="C:extracellular region"/>
    <property type="evidence" value="ECO:0007669"/>
    <property type="project" value="UniProtKB-SubCell"/>
</dbReference>
<sequence>AATAATPATAATPARA</sequence>